<proteinExistence type="inferred from homology"/>
<reference key="1">
    <citation type="submission" date="2001-12" db="EMBL/GenBank/DDBJ databases">
        <title>Cloning, nucleotide sequencing, and expression of a hemin-binding protein of Bartonella henselae.</title>
        <authorList>
            <person name="Zimmermann R."/>
            <person name="Augustin K."/>
            <person name="Schaal K."/>
            <person name="Sander A."/>
        </authorList>
    </citation>
    <scope>NUCLEOTIDE SEQUENCE [GENOMIC DNA]</scope>
</reference>
<reference key="2">
    <citation type="journal article" date="2004" name="Proc. Natl. Acad. Sci. U.S.A.">
        <title>The louse-borne human pathogen Bartonella quintana is a genomic derivative of the zoonotic agent Bartonella henselae.</title>
        <authorList>
            <person name="Alsmark U.C.M."/>
            <person name="Frank A.C."/>
            <person name="Karlberg E.O."/>
            <person name="Legault B.-A."/>
            <person name="Ardell D.H."/>
            <person name="Canbaeck B."/>
            <person name="Eriksson A.-S."/>
            <person name="Naeslund A.K."/>
            <person name="Handley S.A."/>
            <person name="Huvet M."/>
            <person name="La Scola B."/>
            <person name="Holmberg M."/>
            <person name="Andersson S.G.E."/>
        </authorList>
    </citation>
    <scope>NUCLEOTIDE SEQUENCE [LARGE SCALE GENOMIC DNA]</scope>
    <source>
        <strain>ATCC 49882 / DSM 28221 / CCUG 30454 / Houston 1</strain>
    </source>
</reference>
<keyword id="KW-0012">Acyltransferase</keyword>
<keyword id="KW-0963">Cytoplasm</keyword>
<keyword id="KW-0441">Lipid A biosynthesis</keyword>
<keyword id="KW-0444">Lipid biosynthesis</keyword>
<keyword id="KW-0443">Lipid metabolism</keyword>
<keyword id="KW-0677">Repeat</keyword>
<keyword id="KW-0808">Transferase</keyword>
<organism>
    <name type="scientific">Bartonella henselae (strain ATCC 49882 / DSM 28221 / CCUG 30454 / Houston 1)</name>
    <name type="common">Rochalimaea henselae</name>
    <dbReference type="NCBI Taxonomy" id="283166"/>
    <lineage>
        <taxon>Bacteria</taxon>
        <taxon>Pseudomonadati</taxon>
        <taxon>Pseudomonadota</taxon>
        <taxon>Alphaproteobacteria</taxon>
        <taxon>Hyphomicrobiales</taxon>
        <taxon>Bartonellaceae</taxon>
        <taxon>Bartonella</taxon>
    </lineage>
</organism>
<name>LPXA_BARHE</name>
<feature type="chain" id="PRO_0000302562" description="Acyl-[acyl-carrier-protein]--UDP-N-acetylglucosamine O-acyltransferase">
    <location>
        <begin position="1"/>
        <end position="274"/>
    </location>
</feature>
<evidence type="ECO:0000255" key="1">
    <source>
        <dbReference type="HAMAP-Rule" id="MF_00387"/>
    </source>
</evidence>
<dbReference type="EC" id="2.3.1.129" evidence="1"/>
<dbReference type="EMBL" id="AF461795">
    <property type="protein sequence ID" value="AAL66377.1"/>
    <property type="molecule type" value="Genomic_DNA"/>
</dbReference>
<dbReference type="EMBL" id="BX897699">
    <property type="protein sequence ID" value="CAF27435.1"/>
    <property type="molecule type" value="Genomic_DNA"/>
</dbReference>
<dbReference type="RefSeq" id="WP_011180555.1">
    <property type="nucleotide sequence ID" value="NZ_LRIJ02000001.1"/>
</dbReference>
<dbReference type="SMR" id="Q8VQ21"/>
<dbReference type="PaxDb" id="283166-BH06310"/>
<dbReference type="EnsemblBacteria" id="CAF27435">
    <property type="protein sequence ID" value="CAF27435"/>
    <property type="gene ID" value="BH06310"/>
</dbReference>
<dbReference type="GeneID" id="92985643"/>
<dbReference type="KEGG" id="bhe:BH06310"/>
<dbReference type="eggNOG" id="COG1043">
    <property type="taxonomic scope" value="Bacteria"/>
</dbReference>
<dbReference type="OrthoDB" id="9807278at2"/>
<dbReference type="UniPathway" id="UPA00359">
    <property type="reaction ID" value="UER00477"/>
</dbReference>
<dbReference type="Proteomes" id="UP000000421">
    <property type="component" value="Chromosome"/>
</dbReference>
<dbReference type="GO" id="GO:0005737">
    <property type="term" value="C:cytoplasm"/>
    <property type="evidence" value="ECO:0007669"/>
    <property type="project" value="UniProtKB-SubCell"/>
</dbReference>
<dbReference type="GO" id="GO:0016020">
    <property type="term" value="C:membrane"/>
    <property type="evidence" value="ECO:0007669"/>
    <property type="project" value="GOC"/>
</dbReference>
<dbReference type="GO" id="GO:0008780">
    <property type="term" value="F:acyl-[acyl-carrier-protein]-UDP-N-acetylglucosamine O-acyltransferase activity"/>
    <property type="evidence" value="ECO:0007669"/>
    <property type="project" value="UniProtKB-UniRule"/>
</dbReference>
<dbReference type="GO" id="GO:0009245">
    <property type="term" value="P:lipid A biosynthetic process"/>
    <property type="evidence" value="ECO:0007669"/>
    <property type="project" value="UniProtKB-UniRule"/>
</dbReference>
<dbReference type="CDD" id="cd03351">
    <property type="entry name" value="LbH_UDP-GlcNAc_AT"/>
    <property type="match status" value="1"/>
</dbReference>
<dbReference type="Gene3D" id="2.160.10.10">
    <property type="entry name" value="Hexapeptide repeat proteins"/>
    <property type="match status" value="1"/>
</dbReference>
<dbReference type="Gene3D" id="1.20.1180.10">
    <property type="entry name" value="Udp N-acetylglucosamine O-acyltransferase, C-terminal domain"/>
    <property type="match status" value="1"/>
</dbReference>
<dbReference type="HAMAP" id="MF_00387">
    <property type="entry name" value="LpxA"/>
    <property type="match status" value="1"/>
</dbReference>
<dbReference type="InterPro" id="IPR029098">
    <property type="entry name" value="Acetyltransf_C"/>
</dbReference>
<dbReference type="InterPro" id="IPR037157">
    <property type="entry name" value="Acetyltransf_C_sf"/>
</dbReference>
<dbReference type="InterPro" id="IPR001451">
    <property type="entry name" value="Hexapep"/>
</dbReference>
<dbReference type="InterPro" id="IPR010137">
    <property type="entry name" value="Lipid_A_LpxA"/>
</dbReference>
<dbReference type="InterPro" id="IPR011004">
    <property type="entry name" value="Trimer_LpxA-like_sf"/>
</dbReference>
<dbReference type="NCBIfam" id="TIGR01852">
    <property type="entry name" value="lipid_A_lpxA"/>
    <property type="match status" value="1"/>
</dbReference>
<dbReference type="NCBIfam" id="NF003657">
    <property type="entry name" value="PRK05289.1"/>
    <property type="match status" value="1"/>
</dbReference>
<dbReference type="PANTHER" id="PTHR43480">
    <property type="entry name" value="ACYL-[ACYL-CARRIER-PROTEIN]--UDP-N-ACETYLGLUCOSAMINE O-ACYLTRANSFERASE"/>
    <property type="match status" value="1"/>
</dbReference>
<dbReference type="PANTHER" id="PTHR43480:SF1">
    <property type="entry name" value="ACYL-[ACYL-CARRIER-PROTEIN]--UDP-N-ACETYLGLUCOSAMINE O-ACYLTRANSFERASE, MITOCHONDRIAL-RELATED"/>
    <property type="match status" value="1"/>
</dbReference>
<dbReference type="Pfam" id="PF13720">
    <property type="entry name" value="Acetyltransf_11"/>
    <property type="match status" value="1"/>
</dbReference>
<dbReference type="Pfam" id="PF00132">
    <property type="entry name" value="Hexapep"/>
    <property type="match status" value="1"/>
</dbReference>
<dbReference type="PIRSF" id="PIRSF000456">
    <property type="entry name" value="UDP-GlcNAc_acltr"/>
    <property type="match status" value="1"/>
</dbReference>
<dbReference type="SUPFAM" id="SSF51161">
    <property type="entry name" value="Trimeric LpxA-like enzymes"/>
    <property type="match status" value="1"/>
</dbReference>
<dbReference type="PROSITE" id="PS00101">
    <property type="entry name" value="HEXAPEP_TRANSFERASES"/>
    <property type="match status" value="1"/>
</dbReference>
<gene>
    <name evidence="1" type="primary">lpxA</name>
    <name type="ordered locus">BH06310</name>
</gene>
<accession>Q8VQ21</accession>
<comment type="function">
    <text evidence="1">Involved in the biosynthesis of lipid A, a phosphorylated glycolipid that anchors the lipopolysaccharide to the outer membrane of the cell.</text>
</comment>
<comment type="catalytic activity">
    <reaction evidence="1">
        <text>a (3R)-hydroxyacyl-[ACP] + UDP-N-acetyl-alpha-D-glucosamine = a UDP-3-O-[(3R)-3-hydroxyacyl]-N-acetyl-alpha-D-glucosamine + holo-[ACP]</text>
        <dbReference type="Rhea" id="RHEA:67812"/>
        <dbReference type="Rhea" id="RHEA-COMP:9685"/>
        <dbReference type="Rhea" id="RHEA-COMP:9945"/>
        <dbReference type="ChEBI" id="CHEBI:57705"/>
        <dbReference type="ChEBI" id="CHEBI:64479"/>
        <dbReference type="ChEBI" id="CHEBI:78827"/>
        <dbReference type="ChEBI" id="CHEBI:173225"/>
        <dbReference type="EC" id="2.3.1.129"/>
    </reaction>
</comment>
<comment type="pathway">
    <text evidence="1">Glycolipid biosynthesis; lipid IV(A) biosynthesis; lipid IV(A) from (3R)-3-hydroxytetradecanoyl-[acyl-carrier-protein] and UDP-N-acetyl-alpha-D-glucosamine: step 1/6.</text>
</comment>
<comment type="subunit">
    <text evidence="1">Homotrimer.</text>
</comment>
<comment type="subcellular location">
    <subcellularLocation>
        <location evidence="1">Cytoplasm</location>
    </subcellularLocation>
</comment>
<comment type="similarity">
    <text evidence="1">Belongs to the transferase hexapeptide repeat family. LpxA subfamily.</text>
</comment>
<sequence>MSGTKIHPTALVEKGAQLGENVFVGPFCHISSEAVIGDGCSLMSHVVIMGKTTLGADSKVFSHAILGAEPQDNKHKGGYTTLSIGKNCTIREGVTMHRGSDSSVGMTIVGDNCQFFCYAHIAHDCRVGNNVTFANNVMIAGHVTVGDYVIIGGGAAVHQFVRVGHHAFIGGVSALVGDLIPYGTAVGVQAKLAGLNIIGMKRAGLERKDIHALRHAVAMLFDHSKPFKERVSDVASFYPASQSVVDVVNFIKEKGKRFYCTPKFEGDRIKENKD</sequence>
<protein>
    <recommendedName>
        <fullName evidence="1">Acyl-[acyl-carrier-protein]--UDP-N-acetylglucosamine O-acyltransferase</fullName>
        <shortName evidence="1">UDP-N-acetylglucosamine acyltransferase</shortName>
        <ecNumber evidence="1">2.3.1.129</ecNumber>
    </recommendedName>
</protein>